<sequence>MPISGVDDGYFPLSYKGGKGKTALVVVTFYDYEMIDLDWGLITVDGNDATDVLKQLRKGDIVILDGVIFAGFNYIVPYSDNMIFFYSKMPKVDLIKNALMKHFQADTERVREILYVLNNLKQIPTKRGNVFLYSTVELSLAKSIIEKYQIYSKIPEVLKSAHVIASSLGRFLARYKKTI</sequence>
<feature type="chain" id="PRO_1000212133" description="UPF0215 protein M1627_1961">
    <location>
        <begin position="1"/>
        <end position="179"/>
    </location>
</feature>
<accession>C3MZK0</accession>
<organism>
    <name type="scientific">Saccharolobus islandicus (strain M.16.27)</name>
    <name type="common">Sulfolobus islandicus</name>
    <dbReference type="NCBI Taxonomy" id="427318"/>
    <lineage>
        <taxon>Archaea</taxon>
        <taxon>Thermoproteota</taxon>
        <taxon>Thermoprotei</taxon>
        <taxon>Sulfolobales</taxon>
        <taxon>Sulfolobaceae</taxon>
        <taxon>Saccharolobus</taxon>
    </lineage>
</organism>
<reference key="1">
    <citation type="journal article" date="2009" name="Proc. Natl. Acad. Sci. U.S.A.">
        <title>Biogeography of the Sulfolobus islandicus pan-genome.</title>
        <authorList>
            <person name="Reno M.L."/>
            <person name="Held N.L."/>
            <person name="Fields C.J."/>
            <person name="Burke P.V."/>
            <person name="Whitaker R.J."/>
        </authorList>
    </citation>
    <scope>NUCLEOTIDE SEQUENCE [LARGE SCALE GENOMIC DNA]</scope>
    <source>
        <strain>M.16.27</strain>
    </source>
</reference>
<dbReference type="EMBL" id="CP001401">
    <property type="protein sequence ID" value="ACP55832.1"/>
    <property type="molecule type" value="Genomic_DNA"/>
</dbReference>
<dbReference type="RefSeq" id="WP_012711857.1">
    <property type="nucleotide sequence ID" value="NC_012632.1"/>
</dbReference>
<dbReference type="SMR" id="C3MZK0"/>
<dbReference type="KEGG" id="sim:M1627_1961"/>
<dbReference type="HOGENOM" id="CLU_095956_1_1_2"/>
<dbReference type="Proteomes" id="UP000002307">
    <property type="component" value="Chromosome"/>
</dbReference>
<dbReference type="Gene3D" id="3.30.2170.10">
    <property type="entry name" value="archaeoglobus fulgidus dsm 4304 superfamily"/>
    <property type="match status" value="1"/>
</dbReference>
<dbReference type="HAMAP" id="MF_00582">
    <property type="entry name" value="UPF0215"/>
    <property type="match status" value="1"/>
</dbReference>
<dbReference type="InterPro" id="IPR002802">
    <property type="entry name" value="Endo_dU"/>
</dbReference>
<dbReference type="PANTHER" id="PTHR39518">
    <property type="entry name" value="UPF0215 PROTEIN MJ1150"/>
    <property type="match status" value="1"/>
</dbReference>
<dbReference type="PANTHER" id="PTHR39518:SF2">
    <property type="entry name" value="UPF0215 PROTEIN MJ1150"/>
    <property type="match status" value="1"/>
</dbReference>
<dbReference type="Pfam" id="PF01949">
    <property type="entry name" value="DUF99"/>
    <property type="match status" value="1"/>
</dbReference>
<dbReference type="PIRSF" id="PIRSF006380">
    <property type="entry name" value="UCP006380"/>
    <property type="match status" value="1"/>
</dbReference>
<comment type="similarity">
    <text evidence="1">Belongs to the UPF0215 family.</text>
</comment>
<evidence type="ECO:0000255" key="1">
    <source>
        <dbReference type="HAMAP-Rule" id="MF_00582"/>
    </source>
</evidence>
<name>Y1961_SACI3</name>
<protein>
    <recommendedName>
        <fullName evidence="1">UPF0215 protein M1627_1961</fullName>
    </recommendedName>
</protein>
<gene>
    <name type="ordered locus">M1627_1961</name>
</gene>
<proteinExistence type="inferred from homology"/>